<feature type="chain" id="PRO_0000292185" description="Replication factor C large subunit">
    <location>
        <begin position="1"/>
        <end position="423"/>
    </location>
</feature>
<feature type="binding site" evidence="1">
    <location>
        <begin position="63"/>
        <end position="70"/>
    </location>
    <ligand>
        <name>ATP</name>
        <dbReference type="ChEBI" id="CHEBI:30616"/>
    </ligand>
</feature>
<comment type="function">
    <text evidence="1">Part of the RFC clamp loader complex which loads the PCNA sliding clamp onto DNA.</text>
</comment>
<comment type="subunit">
    <text evidence="1">Heteromultimer composed of small subunits (RfcS) and large subunits (RfcL).</text>
</comment>
<comment type="similarity">
    <text evidence="1">Belongs to the activator 1 small subunits family. RfcL subfamily.</text>
</comment>
<organism>
    <name type="scientific">Pyrobaculum islandicum (strain DSM 4184 / JCM 9189 / GEO3)</name>
    <dbReference type="NCBI Taxonomy" id="384616"/>
    <lineage>
        <taxon>Archaea</taxon>
        <taxon>Thermoproteota</taxon>
        <taxon>Thermoprotei</taxon>
        <taxon>Thermoproteales</taxon>
        <taxon>Thermoproteaceae</taxon>
        <taxon>Pyrobaculum</taxon>
    </lineage>
</organism>
<reference key="1">
    <citation type="submission" date="2006-12" db="EMBL/GenBank/DDBJ databases">
        <title>Complete sequence of Pyrobaculum islandicum DSM 4184.</title>
        <authorList>
            <person name="Copeland A."/>
            <person name="Lucas S."/>
            <person name="Lapidus A."/>
            <person name="Barry K."/>
            <person name="Detter J.C."/>
            <person name="Glavina del Rio T."/>
            <person name="Dalin E."/>
            <person name="Tice H."/>
            <person name="Pitluck S."/>
            <person name="Meincke L."/>
            <person name="Brettin T."/>
            <person name="Bruce D."/>
            <person name="Han C."/>
            <person name="Tapia R."/>
            <person name="Gilna P."/>
            <person name="Schmutz J."/>
            <person name="Larimer F."/>
            <person name="Land M."/>
            <person name="Hauser L."/>
            <person name="Kyrpides N."/>
            <person name="Mikhailova N."/>
            <person name="Cozen A.E."/>
            <person name="Fitz-Gibbon S.T."/>
            <person name="House C.H."/>
            <person name="Saltikov C."/>
            <person name="Lowe T."/>
            <person name="Richardson P."/>
        </authorList>
    </citation>
    <scope>NUCLEOTIDE SEQUENCE [LARGE SCALE GENOMIC DNA]</scope>
    <source>
        <strain>DSM 4184 / JCM 9189 / GEO3</strain>
    </source>
</reference>
<proteinExistence type="inferred from homology"/>
<gene>
    <name evidence="1" type="primary">rfcL</name>
    <name type="ordered locus">Pisl_0657</name>
</gene>
<name>RFCL_PYRIL</name>
<protein>
    <recommendedName>
        <fullName evidence="1">Replication factor C large subunit</fullName>
        <shortName evidence="1">RFC large subunit</shortName>
    </recommendedName>
    <alternativeName>
        <fullName evidence="1">Clamp loader large subunit</fullName>
    </alternativeName>
</protein>
<sequence>MAIPWVEKYRPKTFEEIVNQEEAKYTLASWICAKFKAPREFCTRWAKKKDKEIVEAKAVLLAGPPGIGKTTIVHALAREIKYELIELNASDVRTGERIKQVVGRGLREASLFGYEGKLVLFDEVDGLHVKEDLGGLETIVEIIEIAKVPVIMTANNPYDPKFRPLRDIALVINLKRLSEDDVVEVLRRICANEGAKCEEEALRSIAKSSLGDLRAAINDLQMYLSSGKKILTVDDIKRVGERNPQLSMFEILDRVYRARWFDEARAISFNPSFDWEQYFLWALETIPTVYKDLELMAIAYDRLSKADMFLGRIKKTQEWELLPYALELSLGGISQVKNKPRLPPFIKYGFPQRLLLLAKSKEARRRREALVEYLAQNLHVSKSFVKSELIYVLSAIAKKDHSIIDRLSKALGINALDIKNLLL</sequence>
<dbReference type="EMBL" id="CP000504">
    <property type="protein sequence ID" value="ABL87835.1"/>
    <property type="molecule type" value="Genomic_DNA"/>
</dbReference>
<dbReference type="RefSeq" id="WP_011762411.1">
    <property type="nucleotide sequence ID" value="NC_008701.1"/>
</dbReference>
<dbReference type="SMR" id="A1RSA3"/>
<dbReference type="STRING" id="384616.Pisl_0657"/>
<dbReference type="GeneID" id="4616887"/>
<dbReference type="KEGG" id="pis:Pisl_0657"/>
<dbReference type="eggNOG" id="arCOG00470">
    <property type="taxonomic scope" value="Archaea"/>
</dbReference>
<dbReference type="HOGENOM" id="CLU_027255_1_1_2"/>
<dbReference type="OrthoDB" id="8658at2157"/>
<dbReference type="Proteomes" id="UP000002595">
    <property type="component" value="Chromosome"/>
</dbReference>
<dbReference type="GO" id="GO:0005524">
    <property type="term" value="F:ATP binding"/>
    <property type="evidence" value="ECO:0007669"/>
    <property type="project" value="UniProtKB-UniRule"/>
</dbReference>
<dbReference type="GO" id="GO:0016887">
    <property type="term" value="F:ATP hydrolysis activity"/>
    <property type="evidence" value="ECO:0007669"/>
    <property type="project" value="InterPro"/>
</dbReference>
<dbReference type="GO" id="GO:0003689">
    <property type="term" value="F:DNA clamp loader activity"/>
    <property type="evidence" value="ECO:0007669"/>
    <property type="project" value="UniProtKB-UniRule"/>
</dbReference>
<dbReference type="GO" id="GO:0006260">
    <property type="term" value="P:DNA replication"/>
    <property type="evidence" value="ECO:0007669"/>
    <property type="project" value="UniProtKB-UniRule"/>
</dbReference>
<dbReference type="CDD" id="cd00009">
    <property type="entry name" value="AAA"/>
    <property type="match status" value="1"/>
</dbReference>
<dbReference type="CDD" id="cd18140">
    <property type="entry name" value="HLD_clamp_RFC"/>
    <property type="match status" value="1"/>
</dbReference>
<dbReference type="Gene3D" id="1.10.8.60">
    <property type="match status" value="1"/>
</dbReference>
<dbReference type="Gene3D" id="3.40.50.300">
    <property type="entry name" value="P-loop containing nucleotide triphosphate hydrolases"/>
    <property type="match status" value="1"/>
</dbReference>
<dbReference type="HAMAP" id="MF_01508">
    <property type="entry name" value="RfcL"/>
    <property type="match status" value="1"/>
</dbReference>
<dbReference type="InterPro" id="IPR003593">
    <property type="entry name" value="AAA+_ATPase"/>
</dbReference>
<dbReference type="InterPro" id="IPR003959">
    <property type="entry name" value="ATPase_AAA_core"/>
</dbReference>
<dbReference type="InterPro" id="IPR027417">
    <property type="entry name" value="P-loop_NTPase"/>
</dbReference>
<dbReference type="InterPro" id="IPR023935">
    <property type="entry name" value="Rep_factor-C_lsu"/>
</dbReference>
<dbReference type="InterPro" id="IPR047854">
    <property type="entry name" value="RFC_lid"/>
</dbReference>
<dbReference type="NCBIfam" id="NF003229">
    <property type="entry name" value="PRK04195.1-5"/>
    <property type="match status" value="1"/>
</dbReference>
<dbReference type="PANTHER" id="PTHR23389">
    <property type="entry name" value="CHROMOSOME TRANSMISSION FIDELITY FACTOR 18"/>
    <property type="match status" value="1"/>
</dbReference>
<dbReference type="PANTHER" id="PTHR23389:SF6">
    <property type="entry name" value="REPLICATION FACTOR C SUBUNIT 1"/>
    <property type="match status" value="1"/>
</dbReference>
<dbReference type="Pfam" id="PF00004">
    <property type="entry name" value="AAA"/>
    <property type="match status" value="1"/>
</dbReference>
<dbReference type="Pfam" id="PF21960">
    <property type="entry name" value="RCF1-5-like_lid"/>
    <property type="match status" value="1"/>
</dbReference>
<dbReference type="SMART" id="SM00382">
    <property type="entry name" value="AAA"/>
    <property type="match status" value="1"/>
</dbReference>
<dbReference type="SUPFAM" id="SSF52540">
    <property type="entry name" value="P-loop containing nucleoside triphosphate hydrolases"/>
    <property type="match status" value="1"/>
</dbReference>
<evidence type="ECO:0000255" key="1">
    <source>
        <dbReference type="HAMAP-Rule" id="MF_01508"/>
    </source>
</evidence>
<accession>A1RSA3</accession>
<keyword id="KW-0067">ATP-binding</keyword>
<keyword id="KW-0235">DNA replication</keyword>
<keyword id="KW-0547">Nucleotide-binding</keyword>